<reference key="1">
    <citation type="journal article" date="2007" name="BMC Genomics">
        <title>The full-ORF clone resource of the German cDNA consortium.</title>
        <authorList>
            <person name="Bechtel S."/>
            <person name="Rosenfelder H."/>
            <person name="Duda A."/>
            <person name="Schmidt C.P."/>
            <person name="Ernst U."/>
            <person name="Wellenreuther R."/>
            <person name="Mehrle A."/>
            <person name="Schuster C."/>
            <person name="Bahr A."/>
            <person name="Bloecker H."/>
            <person name="Heubner D."/>
            <person name="Hoerlein A."/>
            <person name="Michel G."/>
            <person name="Wedler H."/>
            <person name="Koehrer K."/>
            <person name="Ottenwaelder B."/>
            <person name="Poustka A."/>
            <person name="Wiemann S."/>
            <person name="Schupp I."/>
        </authorList>
    </citation>
    <scope>NUCLEOTIDE SEQUENCE [LARGE SCALE MRNA]</scope>
    <source>
        <tissue>Skeletal muscle</tissue>
    </source>
</reference>
<reference key="2">
    <citation type="journal article" date="2004" name="Genome Res.">
        <title>The status, quality, and expansion of the NIH full-length cDNA project: the Mammalian Gene Collection (MGC).</title>
        <authorList>
            <consortium name="The MGC Project Team"/>
        </authorList>
    </citation>
    <scope>NUCLEOTIDE SEQUENCE [LARGE SCALE MRNA]</scope>
    <source>
        <tissue>Ovary</tissue>
    </source>
</reference>
<reference key="3">
    <citation type="submission" date="2009-10" db="UniProtKB">
        <authorList>
            <person name="Bienvenut W.V."/>
            <person name="Lempens A."/>
            <person name="Norman J.C."/>
        </authorList>
    </citation>
    <scope>PROTEIN SEQUENCE OF 1-13 AND 178-198</scope>
    <scope>ACETYLATION AT MET-1</scope>
    <scope>IDENTIFICATION BY MASS SPECTROMETRY</scope>
    <source>
        <tissue>Ovarian carcinoma</tissue>
    </source>
</reference>
<reference key="4">
    <citation type="journal article" date="2012" name="Mol. Cell. Proteomics">
        <title>Comparative large-scale characterisation of plant vs. mammal proteins reveals similar and idiosyncratic N-alpha acetylation features.</title>
        <authorList>
            <person name="Bienvenut W.V."/>
            <person name="Sumpton D."/>
            <person name="Martinez A."/>
            <person name="Lilla S."/>
            <person name="Espagne C."/>
            <person name="Meinnel T."/>
            <person name="Giglione C."/>
        </authorList>
    </citation>
    <scope>ACETYLATION [LARGE SCALE ANALYSIS] AT MET-1</scope>
    <scope>IDENTIFICATION BY MASS SPECTROMETRY [LARGE SCALE ANALYSIS]</scope>
</reference>
<reference key="5">
    <citation type="journal article" date="2012" name="Proc. Natl. Acad. Sci. U.S.A.">
        <title>N-terminal acetylome analyses and functional insights of the N-terminal acetyltransferase NatB.</title>
        <authorList>
            <person name="Van Damme P."/>
            <person name="Lasa M."/>
            <person name="Polevoda B."/>
            <person name="Gazquez C."/>
            <person name="Elosegui-Artola A."/>
            <person name="Kim D.S."/>
            <person name="De Juan-Pardo E."/>
            <person name="Demeyer K."/>
            <person name="Hole K."/>
            <person name="Larrea E."/>
            <person name="Timmerman E."/>
            <person name="Prieto J."/>
            <person name="Arnesen T."/>
            <person name="Sherman F."/>
            <person name="Gevaert K."/>
            <person name="Aldabe R."/>
        </authorList>
    </citation>
    <scope>ACETYLATION [LARGE SCALE ANALYSIS] AT MET-1</scope>
    <scope>IDENTIFICATION BY MASS SPECTROMETRY [LARGE SCALE ANALYSIS]</scope>
</reference>
<gene>
    <name type="primary">ANKRD40</name>
</gene>
<name>ANR40_HUMAN</name>
<organism>
    <name type="scientific">Homo sapiens</name>
    <name type="common">Human</name>
    <dbReference type="NCBI Taxonomy" id="9606"/>
    <lineage>
        <taxon>Eukaryota</taxon>
        <taxon>Metazoa</taxon>
        <taxon>Chordata</taxon>
        <taxon>Craniata</taxon>
        <taxon>Vertebrata</taxon>
        <taxon>Euteleostomi</taxon>
        <taxon>Mammalia</taxon>
        <taxon>Eutheria</taxon>
        <taxon>Euarchontoglires</taxon>
        <taxon>Primates</taxon>
        <taxon>Haplorrhini</taxon>
        <taxon>Catarrhini</taxon>
        <taxon>Hominidae</taxon>
        <taxon>Homo</taxon>
    </lineage>
</organism>
<evidence type="ECO:0000256" key="1">
    <source>
        <dbReference type="SAM" id="MobiDB-lite"/>
    </source>
</evidence>
<evidence type="ECO:0000269" key="2">
    <source ref="3"/>
</evidence>
<evidence type="ECO:0000305" key="3"/>
<evidence type="ECO:0007744" key="4">
    <source>
    </source>
</evidence>
<evidence type="ECO:0007744" key="5">
    <source>
    </source>
</evidence>
<accession>Q6AI12</accession>
<accession>Q96E32</accession>
<sequence length="368" mass="41088">MNALLEQKEQQERLREAAALGDIREVQKLVESGVDVNSQNEVNGWTCLHWACKRNHGQVVSYLLKSGADKEILTTKGEMPVQLTSRREIRKIMGVEEEDDDDDDDDNLPQLKKESELPFVPNYLANPAFPFIYTPTAEDSAQMQNGGPSTPPASPPADGSPPLLPPGEPPLLGTFPRDHTSLALVQNGDVSAPSAILRTPESTKPGPVCQPPVSQSRSLFSSVPSKPPMSLEPQNGTYAGPAPAFQPFFFTGAFPFNMQELVLKVRIQNPSLRENDFIEIELDRQELTYQELLRVCCCELGVNPDQVEKIRKLPNTLLRKDKDVARLQDFQELELVLMISENNFLFRNAASTLTERPCYNRRASKLTY</sequence>
<comment type="interaction">
    <interactant intactId="EBI-2838246">
        <id>Q6AI12</id>
    </interactant>
    <interactant intactId="EBI-1053240">
        <id>P23526</id>
        <label>AHCY</label>
    </interactant>
    <organismsDiffer>false</organismsDiffer>
    <experiments>10</experiments>
</comment>
<comment type="interaction">
    <interactant intactId="EBI-2838246">
        <id>Q6AI12</id>
    </interactant>
    <interactant intactId="EBI-713291">
        <id>P51114</id>
        <label>FXR1</label>
    </interactant>
    <organismsDiffer>false</organismsDiffer>
    <experiments>2</experiments>
</comment>
<comment type="interaction">
    <interactant intactId="EBI-2838246">
        <id>Q6AI12</id>
    </interactant>
    <interactant intactId="EBI-524105">
        <id>P01374</id>
        <label>LTA</label>
    </interactant>
    <organismsDiffer>false</organismsDiffer>
    <experiments>3</experiments>
</comment>
<comment type="interaction">
    <interactant intactId="EBI-2838246">
        <id>Q6AI12</id>
    </interactant>
    <interactant intactId="EBI-714158">
        <id>Q13526</id>
        <label>PIN1</label>
    </interactant>
    <organismsDiffer>false</organismsDiffer>
    <experiments>6</experiments>
</comment>
<comment type="interaction">
    <interactant intactId="EBI-2838246">
        <id>Q6AI12</id>
    </interactant>
    <interactant intactId="EBI-746453">
        <id>P54725</id>
        <label>RAD23A</label>
    </interactant>
    <organismsDiffer>false</organismsDiffer>
    <experiments>3</experiments>
</comment>
<comment type="interaction">
    <interactant intactId="EBI-2838246">
        <id>Q6AI12</id>
    </interactant>
    <interactant intactId="EBI-2811558">
        <id>Q8NDN9</id>
        <label>RCBTB1</label>
    </interactant>
    <organismsDiffer>false</organismsDiffer>
    <experiments>2</experiments>
</comment>
<comment type="interaction">
    <interactant intactId="EBI-2838246">
        <id>Q6AI12</id>
    </interactant>
    <interactant intactId="EBI-1055010">
        <id>P40938</id>
        <label>RFC3</label>
    </interactant>
    <organismsDiffer>false</organismsDiffer>
    <experiments>3</experiments>
</comment>
<comment type="interaction">
    <interactant intactId="EBI-2838246">
        <id>Q6AI12</id>
    </interactant>
    <interactant intactId="EBI-727004">
        <id>O00560</id>
        <label>SDCBP</label>
    </interactant>
    <organismsDiffer>false</organismsDiffer>
    <experiments>3</experiments>
</comment>
<comment type="interaction">
    <interactant intactId="EBI-2838246">
        <id>Q6AI12</id>
    </interactant>
    <interactant intactId="EBI-3922541">
        <id>Q96C45</id>
        <label>ULK4</label>
    </interactant>
    <organismsDiffer>false</organismsDiffer>
    <experiments>2</experiments>
</comment>
<feature type="chain" id="PRO_0000244368" description="Ankyrin repeat domain-containing protein 40">
    <location>
        <begin position="1"/>
        <end position="368"/>
    </location>
</feature>
<feature type="repeat" description="ANK 1">
    <location>
        <begin position="9"/>
        <end position="38"/>
    </location>
</feature>
<feature type="repeat" description="ANK 2">
    <location>
        <begin position="43"/>
        <end position="72"/>
    </location>
</feature>
<feature type="region of interest" description="Disordered" evidence="1">
    <location>
        <begin position="93"/>
        <end position="115"/>
    </location>
</feature>
<feature type="region of interest" description="Disordered" evidence="1">
    <location>
        <begin position="139"/>
        <end position="176"/>
    </location>
</feature>
<feature type="region of interest" description="Disordered" evidence="1">
    <location>
        <begin position="196"/>
        <end position="238"/>
    </location>
</feature>
<feature type="compositionally biased region" description="Acidic residues" evidence="1">
    <location>
        <begin position="95"/>
        <end position="107"/>
    </location>
</feature>
<feature type="compositionally biased region" description="Pro residues" evidence="1">
    <location>
        <begin position="149"/>
        <end position="169"/>
    </location>
</feature>
<feature type="compositionally biased region" description="Polar residues" evidence="1">
    <location>
        <begin position="212"/>
        <end position="224"/>
    </location>
</feature>
<feature type="modified residue" description="N-acetylmethionine" evidence="2 4 5">
    <location>
        <position position="1"/>
    </location>
</feature>
<feature type="sequence conflict" description="In Ref. 1; CAH10502." evidence="3" ref="1">
    <original>T</original>
    <variation>A</variation>
    <location>
        <position position="352"/>
    </location>
</feature>
<dbReference type="EMBL" id="CR627413">
    <property type="protein sequence ID" value="CAH10502.1"/>
    <property type="molecule type" value="mRNA"/>
</dbReference>
<dbReference type="EMBL" id="BC012978">
    <property type="protein sequence ID" value="AAH12978.1"/>
    <property type="molecule type" value="mRNA"/>
</dbReference>
<dbReference type="CCDS" id="CCDS11572.1"/>
<dbReference type="RefSeq" id="NP_443087.1">
    <property type="nucleotide sequence ID" value="NM_052855.4"/>
</dbReference>
<dbReference type="SMR" id="Q6AI12"/>
<dbReference type="BioGRID" id="124821">
    <property type="interactions" value="120"/>
</dbReference>
<dbReference type="FunCoup" id="Q6AI12">
    <property type="interactions" value="108"/>
</dbReference>
<dbReference type="IntAct" id="Q6AI12">
    <property type="interactions" value="64"/>
</dbReference>
<dbReference type="MINT" id="Q6AI12"/>
<dbReference type="STRING" id="9606.ENSP00000285243"/>
<dbReference type="GlyCosmos" id="Q6AI12">
    <property type="glycosylation" value="1 site, 1 glycan"/>
</dbReference>
<dbReference type="GlyGen" id="Q6AI12">
    <property type="glycosylation" value="2 sites, 1 O-linked glycan (2 sites)"/>
</dbReference>
<dbReference type="iPTMnet" id="Q6AI12"/>
<dbReference type="PhosphoSitePlus" id="Q6AI12"/>
<dbReference type="BioMuta" id="ANKRD40"/>
<dbReference type="DMDM" id="109940224"/>
<dbReference type="jPOST" id="Q6AI12"/>
<dbReference type="MassIVE" id="Q6AI12"/>
<dbReference type="PaxDb" id="9606-ENSP00000285243"/>
<dbReference type="PeptideAtlas" id="Q6AI12"/>
<dbReference type="ProteomicsDB" id="66185"/>
<dbReference type="Pumba" id="Q6AI12"/>
<dbReference type="Antibodypedia" id="18157">
    <property type="antibodies" value="123 antibodies from 17 providers"/>
</dbReference>
<dbReference type="DNASU" id="91369"/>
<dbReference type="Ensembl" id="ENST00000285243.7">
    <property type="protein sequence ID" value="ENSP00000285243.6"/>
    <property type="gene ID" value="ENSG00000154945.7"/>
</dbReference>
<dbReference type="GeneID" id="91369"/>
<dbReference type="KEGG" id="hsa:91369"/>
<dbReference type="MANE-Select" id="ENST00000285243.7">
    <property type="protein sequence ID" value="ENSP00000285243.6"/>
    <property type="RefSeq nucleotide sequence ID" value="NM_052855.4"/>
    <property type="RefSeq protein sequence ID" value="NP_443087.1"/>
</dbReference>
<dbReference type="UCSC" id="uc002iso.4">
    <property type="organism name" value="human"/>
</dbReference>
<dbReference type="AGR" id="HGNC:28233"/>
<dbReference type="CTD" id="91369"/>
<dbReference type="DisGeNET" id="91369"/>
<dbReference type="GeneCards" id="ANKRD40"/>
<dbReference type="HGNC" id="HGNC:28233">
    <property type="gene designation" value="ANKRD40"/>
</dbReference>
<dbReference type="HPA" id="ENSG00000154945">
    <property type="expression patterns" value="Tissue enhanced (brain)"/>
</dbReference>
<dbReference type="neXtProt" id="NX_Q6AI12"/>
<dbReference type="OpenTargets" id="ENSG00000154945"/>
<dbReference type="PharmGKB" id="PA142672607"/>
<dbReference type="VEuPathDB" id="HostDB:ENSG00000154945"/>
<dbReference type="eggNOG" id="KOG0307">
    <property type="taxonomic scope" value="Eukaryota"/>
</dbReference>
<dbReference type="GeneTree" id="ENSGT00390000007792"/>
<dbReference type="HOGENOM" id="CLU_068367_0_0_1"/>
<dbReference type="InParanoid" id="Q6AI12"/>
<dbReference type="OMA" id="DYTEDTQ"/>
<dbReference type="OrthoDB" id="194358at2759"/>
<dbReference type="PAN-GO" id="Q6AI12">
    <property type="GO annotations" value="0 GO annotations based on evolutionary models"/>
</dbReference>
<dbReference type="PhylomeDB" id="Q6AI12"/>
<dbReference type="TreeFam" id="TF331472"/>
<dbReference type="PathwayCommons" id="Q6AI12"/>
<dbReference type="SignaLink" id="Q6AI12"/>
<dbReference type="BioGRID-ORCS" id="91369">
    <property type="hits" value="19 hits in 1152 CRISPR screens"/>
</dbReference>
<dbReference type="ChiTaRS" id="ANKRD40">
    <property type="organism name" value="human"/>
</dbReference>
<dbReference type="GenomeRNAi" id="91369"/>
<dbReference type="Pharos" id="Q6AI12">
    <property type="development level" value="Tdark"/>
</dbReference>
<dbReference type="PRO" id="PR:Q6AI12"/>
<dbReference type="Proteomes" id="UP000005640">
    <property type="component" value="Chromosome 17"/>
</dbReference>
<dbReference type="RNAct" id="Q6AI12">
    <property type="molecule type" value="protein"/>
</dbReference>
<dbReference type="Bgee" id="ENSG00000154945">
    <property type="expression patterns" value="Expressed in medial globus pallidus and 198 other cell types or tissues"/>
</dbReference>
<dbReference type="ExpressionAtlas" id="Q6AI12">
    <property type="expression patterns" value="baseline and differential"/>
</dbReference>
<dbReference type="Gene3D" id="1.25.40.20">
    <property type="entry name" value="Ankyrin repeat-containing domain"/>
    <property type="match status" value="1"/>
</dbReference>
<dbReference type="InterPro" id="IPR039195">
    <property type="entry name" value="ANKRD40"/>
</dbReference>
<dbReference type="InterPro" id="IPR002110">
    <property type="entry name" value="Ankyrin_rpt"/>
</dbReference>
<dbReference type="InterPro" id="IPR036770">
    <property type="entry name" value="Ankyrin_rpt-contain_sf"/>
</dbReference>
<dbReference type="PANTHER" id="PTHR24192">
    <property type="entry name" value="ANKYRIN REPEAT DOMAIN 40"/>
    <property type="match status" value="1"/>
</dbReference>
<dbReference type="PANTHER" id="PTHR24192:SF1">
    <property type="entry name" value="ANKYRIN REPEAT DOMAIN-CONTAINING PROTEIN 40"/>
    <property type="match status" value="1"/>
</dbReference>
<dbReference type="Pfam" id="PF13637">
    <property type="entry name" value="Ank_4"/>
    <property type="match status" value="1"/>
</dbReference>
<dbReference type="SMART" id="SM00248">
    <property type="entry name" value="ANK"/>
    <property type="match status" value="2"/>
</dbReference>
<dbReference type="SUPFAM" id="SSF48403">
    <property type="entry name" value="Ankyrin repeat"/>
    <property type="match status" value="1"/>
</dbReference>
<dbReference type="PROSITE" id="PS50297">
    <property type="entry name" value="ANK_REP_REGION"/>
    <property type="match status" value="1"/>
</dbReference>
<dbReference type="PROSITE" id="PS50088">
    <property type="entry name" value="ANK_REPEAT"/>
    <property type="match status" value="1"/>
</dbReference>
<protein>
    <recommendedName>
        <fullName>Ankyrin repeat domain-containing protein 40</fullName>
    </recommendedName>
</protein>
<proteinExistence type="evidence at protein level"/>
<keyword id="KW-0007">Acetylation</keyword>
<keyword id="KW-0040">ANK repeat</keyword>
<keyword id="KW-0903">Direct protein sequencing</keyword>
<keyword id="KW-1267">Proteomics identification</keyword>
<keyword id="KW-1185">Reference proteome</keyword>
<keyword id="KW-0677">Repeat</keyword>